<comment type="function">
    <text evidence="1">Transfers and isomerizes the ribose moiety from AdoMet to the 7-aminomethyl group of 7-deazaguanine (preQ1-tRNA) to give epoxyqueuosine (oQ-tRNA).</text>
</comment>
<comment type="catalytic activity">
    <reaction evidence="1">
        <text>7-aminomethyl-7-carbaguanosine(34) in tRNA + S-adenosyl-L-methionine = epoxyqueuosine(34) in tRNA + adenine + L-methionine + 2 H(+)</text>
        <dbReference type="Rhea" id="RHEA:32155"/>
        <dbReference type="Rhea" id="RHEA-COMP:10342"/>
        <dbReference type="Rhea" id="RHEA-COMP:18582"/>
        <dbReference type="ChEBI" id="CHEBI:15378"/>
        <dbReference type="ChEBI" id="CHEBI:16708"/>
        <dbReference type="ChEBI" id="CHEBI:57844"/>
        <dbReference type="ChEBI" id="CHEBI:59789"/>
        <dbReference type="ChEBI" id="CHEBI:82833"/>
        <dbReference type="ChEBI" id="CHEBI:194443"/>
        <dbReference type="EC" id="2.4.99.17"/>
    </reaction>
</comment>
<comment type="pathway">
    <text evidence="1">tRNA modification; tRNA-queuosine biosynthesis.</text>
</comment>
<comment type="subunit">
    <text evidence="1">Monomer.</text>
</comment>
<comment type="subcellular location">
    <subcellularLocation>
        <location evidence="1">Cytoplasm</location>
    </subcellularLocation>
</comment>
<comment type="similarity">
    <text evidence="1">Belongs to the QueA family.</text>
</comment>
<name>QUEA_BURCH</name>
<sequence>MFTLSDFDFNLPPELIAQTALPDRTASRLLEVDGSVAPARLVDRHFAELPSCIAPGDLLVFNDTKVLKARFFGQKASGGKIEVLIERVTGTHTALAQIRASKSPGAGTTLRLADAFDVTVGERVEPFFTLHFPAPCLDLIEQHGRLPLPPYIEHDADATDETRYQTVYASNPGAVAAPTAGLHFDQPLLDKLDAMGVERATLTLHVGAGTFQPVRVENIAEHKMHSEWYDLPQSLVDKIAATRARGGNVIAVGTTSMRALEAAARSADEAGRPLAATQAETDIFITPGYRFRVVDRLVTNFHLPKSTLLMLVSAFAGVETIRAAYRHAIEERYRFFSYGDAMLLTRRDTPEAPGA</sequence>
<keyword id="KW-0963">Cytoplasm</keyword>
<keyword id="KW-0671">Queuosine biosynthesis</keyword>
<keyword id="KW-0949">S-adenosyl-L-methionine</keyword>
<keyword id="KW-0808">Transferase</keyword>
<dbReference type="EC" id="2.4.99.17" evidence="1"/>
<dbReference type="EMBL" id="CP000458">
    <property type="protein sequence ID" value="ABK07476.1"/>
    <property type="molecule type" value="Genomic_DNA"/>
</dbReference>
<dbReference type="RefSeq" id="WP_011544621.1">
    <property type="nucleotide sequence ID" value="NC_008542.1"/>
</dbReference>
<dbReference type="SMR" id="A0K4P9"/>
<dbReference type="KEGG" id="bch:Bcen2424_0723"/>
<dbReference type="HOGENOM" id="CLU_039110_1_0_4"/>
<dbReference type="UniPathway" id="UPA00392"/>
<dbReference type="GO" id="GO:0005737">
    <property type="term" value="C:cytoplasm"/>
    <property type="evidence" value="ECO:0007669"/>
    <property type="project" value="UniProtKB-SubCell"/>
</dbReference>
<dbReference type="GO" id="GO:0051075">
    <property type="term" value="F:S-adenosylmethionine:tRNA ribosyltransferase-isomerase activity"/>
    <property type="evidence" value="ECO:0007669"/>
    <property type="project" value="UniProtKB-EC"/>
</dbReference>
<dbReference type="GO" id="GO:0008616">
    <property type="term" value="P:queuosine biosynthetic process"/>
    <property type="evidence" value="ECO:0007669"/>
    <property type="project" value="UniProtKB-UniRule"/>
</dbReference>
<dbReference type="GO" id="GO:0002099">
    <property type="term" value="P:tRNA wobble guanine modification"/>
    <property type="evidence" value="ECO:0007669"/>
    <property type="project" value="TreeGrafter"/>
</dbReference>
<dbReference type="FunFam" id="3.40.1780.10:FF:000001">
    <property type="entry name" value="S-adenosylmethionine:tRNA ribosyltransferase-isomerase"/>
    <property type="match status" value="1"/>
</dbReference>
<dbReference type="Gene3D" id="2.40.10.240">
    <property type="entry name" value="QueA-like"/>
    <property type="match status" value="1"/>
</dbReference>
<dbReference type="Gene3D" id="3.40.1780.10">
    <property type="entry name" value="QueA-like"/>
    <property type="match status" value="1"/>
</dbReference>
<dbReference type="HAMAP" id="MF_00113">
    <property type="entry name" value="QueA"/>
    <property type="match status" value="1"/>
</dbReference>
<dbReference type="InterPro" id="IPR003699">
    <property type="entry name" value="QueA"/>
</dbReference>
<dbReference type="InterPro" id="IPR042118">
    <property type="entry name" value="QueA_dom1"/>
</dbReference>
<dbReference type="InterPro" id="IPR042119">
    <property type="entry name" value="QueA_dom2"/>
</dbReference>
<dbReference type="InterPro" id="IPR036100">
    <property type="entry name" value="QueA_sf"/>
</dbReference>
<dbReference type="NCBIfam" id="NF001140">
    <property type="entry name" value="PRK00147.1"/>
    <property type="match status" value="1"/>
</dbReference>
<dbReference type="NCBIfam" id="TIGR00113">
    <property type="entry name" value="queA"/>
    <property type="match status" value="1"/>
</dbReference>
<dbReference type="PANTHER" id="PTHR30307">
    <property type="entry name" value="S-ADENOSYLMETHIONINE:TRNA RIBOSYLTRANSFERASE-ISOMERASE"/>
    <property type="match status" value="1"/>
</dbReference>
<dbReference type="PANTHER" id="PTHR30307:SF0">
    <property type="entry name" value="S-ADENOSYLMETHIONINE:TRNA RIBOSYLTRANSFERASE-ISOMERASE"/>
    <property type="match status" value="1"/>
</dbReference>
<dbReference type="Pfam" id="PF02547">
    <property type="entry name" value="Queuosine_synth"/>
    <property type="match status" value="1"/>
</dbReference>
<dbReference type="SUPFAM" id="SSF111337">
    <property type="entry name" value="QueA-like"/>
    <property type="match status" value="1"/>
</dbReference>
<proteinExistence type="inferred from homology"/>
<protein>
    <recommendedName>
        <fullName evidence="1">S-adenosylmethionine:tRNA ribosyltransferase-isomerase</fullName>
        <ecNumber evidence="1">2.4.99.17</ecNumber>
    </recommendedName>
    <alternativeName>
        <fullName evidence="1">Queuosine biosynthesis protein QueA</fullName>
    </alternativeName>
</protein>
<reference key="1">
    <citation type="submission" date="2006-08" db="EMBL/GenBank/DDBJ databases">
        <title>Complete sequence of chromosome 1 of Burkholderia cenocepacia HI2424.</title>
        <authorList>
            <person name="Copeland A."/>
            <person name="Lucas S."/>
            <person name="Lapidus A."/>
            <person name="Barry K."/>
            <person name="Detter J.C."/>
            <person name="Glavina del Rio T."/>
            <person name="Hammon N."/>
            <person name="Israni S."/>
            <person name="Pitluck S."/>
            <person name="Chain P."/>
            <person name="Malfatti S."/>
            <person name="Shin M."/>
            <person name="Vergez L."/>
            <person name="Schmutz J."/>
            <person name="Larimer F."/>
            <person name="Land M."/>
            <person name="Hauser L."/>
            <person name="Kyrpides N."/>
            <person name="Kim E."/>
            <person name="LiPuma J.J."/>
            <person name="Gonzalez C.F."/>
            <person name="Konstantinidis K."/>
            <person name="Tiedje J.M."/>
            <person name="Richardson P."/>
        </authorList>
    </citation>
    <scope>NUCLEOTIDE SEQUENCE [LARGE SCALE GENOMIC DNA]</scope>
    <source>
        <strain>HI2424</strain>
    </source>
</reference>
<evidence type="ECO:0000255" key="1">
    <source>
        <dbReference type="HAMAP-Rule" id="MF_00113"/>
    </source>
</evidence>
<organism>
    <name type="scientific">Burkholderia cenocepacia (strain HI2424)</name>
    <dbReference type="NCBI Taxonomy" id="331272"/>
    <lineage>
        <taxon>Bacteria</taxon>
        <taxon>Pseudomonadati</taxon>
        <taxon>Pseudomonadota</taxon>
        <taxon>Betaproteobacteria</taxon>
        <taxon>Burkholderiales</taxon>
        <taxon>Burkholderiaceae</taxon>
        <taxon>Burkholderia</taxon>
        <taxon>Burkholderia cepacia complex</taxon>
    </lineage>
</organism>
<gene>
    <name evidence="1" type="primary">queA</name>
    <name type="ordered locus">Bcen2424_0723</name>
</gene>
<accession>A0K4P9</accession>
<feature type="chain" id="PRO_1000015186" description="S-adenosylmethionine:tRNA ribosyltransferase-isomerase">
    <location>
        <begin position="1"/>
        <end position="355"/>
    </location>
</feature>